<name>PARE_HAEIN</name>
<protein>
    <recommendedName>
        <fullName evidence="1">DNA topoisomerase 4 subunit B</fullName>
        <ecNumber evidence="1">5.6.2.2</ecNumber>
    </recommendedName>
    <alternativeName>
        <fullName evidence="1">Topoisomerase IV subunit B</fullName>
    </alternativeName>
</protein>
<proteinExistence type="inferred from homology"/>
<reference key="1">
    <citation type="journal article" date="1995" name="Science">
        <title>Whole-genome random sequencing and assembly of Haemophilus influenzae Rd.</title>
        <authorList>
            <person name="Fleischmann R.D."/>
            <person name="Adams M.D."/>
            <person name="White O."/>
            <person name="Clayton R.A."/>
            <person name="Kirkness E.F."/>
            <person name="Kerlavage A.R."/>
            <person name="Bult C.J."/>
            <person name="Tomb J.-F."/>
            <person name="Dougherty B.A."/>
            <person name="Merrick J.M."/>
            <person name="McKenney K."/>
            <person name="Sutton G.G."/>
            <person name="FitzHugh W."/>
            <person name="Fields C.A."/>
            <person name="Gocayne J.D."/>
            <person name="Scott J.D."/>
            <person name="Shirley R."/>
            <person name="Liu L.-I."/>
            <person name="Glodek A."/>
            <person name="Kelley J.M."/>
            <person name="Weidman J.F."/>
            <person name="Phillips C.A."/>
            <person name="Spriggs T."/>
            <person name="Hedblom E."/>
            <person name="Cotton M.D."/>
            <person name="Utterback T.R."/>
            <person name="Hanna M.C."/>
            <person name="Nguyen D.T."/>
            <person name="Saudek D.M."/>
            <person name="Brandon R.C."/>
            <person name="Fine L.D."/>
            <person name="Fritchman J.L."/>
            <person name="Fuhrmann J.L."/>
            <person name="Geoghagen N.S.M."/>
            <person name="Gnehm C.L."/>
            <person name="McDonald L.A."/>
            <person name="Small K.V."/>
            <person name="Fraser C.M."/>
            <person name="Smith H.O."/>
            <person name="Venter J.C."/>
        </authorList>
    </citation>
    <scope>NUCLEOTIDE SEQUENCE [LARGE SCALE GENOMIC DNA]</scope>
    <source>
        <strain>ATCC 51907 / DSM 11121 / KW20 / Rd</strain>
    </source>
</reference>
<accession>P43703</accession>
<sequence length="632" mass="70173">MTTNYSAQEITVLKDLEPVQIRPGMYTDTTRPNHLAQEVIDNSVDEALAGFATKIEVILHPDQSIEVTDNGRGMPVDIHPTEGVSGVEVILTKLHAGGKFSNKNYEFAGGLHGVGISVVNALSERVDIQVKRNGEIYKIAFENGSKVEELEIIGTCGRRTTGTIVHFKPNPKYFDSAKFSVSRLRHLLRAKAVLCSGLEIKFIDKVNNTQDIWLYEDGLSDYLIEAVNGFETLPKKPFVGEFKGANEAVSWALLWLPEGGELIGESYVNLIPTIQGGTHVNGLRQGLLDAIREFCEFRNLLPRGVKLTADDIWDRCSYILSLKMQDAQFAGQTKERLSSRQSAVFVSGVLKDAFSLWLNQNVQDAEKLAEIAISSAQRRLRAAKKVVRKKLVSGPALPGKLADCGSQDLEKTELFLVEGDSAGGSAKQARDREYQAILPLRGKILNTWEVSPDQVLGSTEIHDIAVALGIDPDSNDLSQLRYGKVCILADADSDGLHIATLLCALFLRHFPKLVQDGHVYVAMPPLYRIDLNKEVFYALDENEKEAILDRLKNKKGKPNVQRFKGLGEMNPSQLRETTMDPNTRRLVQLTYDLGEDQGSDTLELMDMLLAKKRSEDRKNWLQAKGDQVDLSV</sequence>
<keyword id="KW-0067">ATP-binding</keyword>
<keyword id="KW-0238">DNA-binding</keyword>
<keyword id="KW-0413">Isomerase</keyword>
<keyword id="KW-0460">Magnesium</keyword>
<keyword id="KW-0479">Metal-binding</keyword>
<keyword id="KW-0547">Nucleotide-binding</keyword>
<keyword id="KW-1185">Reference proteome</keyword>
<keyword id="KW-0799">Topoisomerase</keyword>
<dbReference type="EC" id="5.6.2.2" evidence="1"/>
<dbReference type="EMBL" id="L42023">
    <property type="protein sequence ID" value="AAC23174.1"/>
    <property type="molecule type" value="Genomic_DNA"/>
</dbReference>
<dbReference type="PIR" id="E64127">
    <property type="entry name" value="E64127"/>
</dbReference>
<dbReference type="RefSeq" id="NP_439677.1">
    <property type="nucleotide sequence ID" value="NC_000907.1"/>
</dbReference>
<dbReference type="SMR" id="P43703"/>
<dbReference type="STRING" id="71421.HI_1528"/>
<dbReference type="EnsemblBacteria" id="AAC23174">
    <property type="protein sequence ID" value="AAC23174"/>
    <property type="gene ID" value="HI_1528"/>
</dbReference>
<dbReference type="KEGG" id="hin:HI_1528"/>
<dbReference type="PATRIC" id="fig|71421.8.peg.1599"/>
<dbReference type="eggNOG" id="COG0187">
    <property type="taxonomic scope" value="Bacteria"/>
</dbReference>
<dbReference type="HOGENOM" id="CLU_006146_4_1_6"/>
<dbReference type="OrthoDB" id="9802808at2"/>
<dbReference type="PhylomeDB" id="P43703"/>
<dbReference type="BioCyc" id="HINF71421:G1GJ1-1550-MONOMER"/>
<dbReference type="Proteomes" id="UP000000579">
    <property type="component" value="Chromosome"/>
</dbReference>
<dbReference type="GO" id="GO:0005694">
    <property type="term" value="C:chromosome"/>
    <property type="evidence" value="ECO:0007669"/>
    <property type="project" value="InterPro"/>
</dbReference>
<dbReference type="GO" id="GO:0005524">
    <property type="term" value="F:ATP binding"/>
    <property type="evidence" value="ECO:0007669"/>
    <property type="project" value="UniProtKB-UniRule"/>
</dbReference>
<dbReference type="GO" id="GO:0003677">
    <property type="term" value="F:DNA binding"/>
    <property type="evidence" value="ECO:0007669"/>
    <property type="project" value="UniProtKB-UniRule"/>
</dbReference>
<dbReference type="GO" id="GO:0003918">
    <property type="term" value="F:DNA topoisomerase type II (double strand cut, ATP-hydrolyzing) activity"/>
    <property type="evidence" value="ECO:0000318"/>
    <property type="project" value="GO_Central"/>
</dbReference>
<dbReference type="GO" id="GO:0046872">
    <property type="term" value="F:metal ion binding"/>
    <property type="evidence" value="ECO:0007669"/>
    <property type="project" value="UniProtKB-KW"/>
</dbReference>
<dbReference type="GO" id="GO:0007059">
    <property type="term" value="P:chromosome segregation"/>
    <property type="evidence" value="ECO:0007669"/>
    <property type="project" value="UniProtKB-UniRule"/>
</dbReference>
<dbReference type="GO" id="GO:0006265">
    <property type="term" value="P:DNA topological change"/>
    <property type="evidence" value="ECO:0000318"/>
    <property type="project" value="GO_Central"/>
</dbReference>
<dbReference type="CDD" id="cd16928">
    <property type="entry name" value="HATPase_GyrB-like"/>
    <property type="match status" value="1"/>
</dbReference>
<dbReference type="CDD" id="cd00822">
    <property type="entry name" value="TopoII_Trans_DNA_gyrase"/>
    <property type="match status" value="1"/>
</dbReference>
<dbReference type="FunFam" id="3.30.565.10:FF:000002">
    <property type="entry name" value="DNA gyrase subunit B"/>
    <property type="match status" value="1"/>
</dbReference>
<dbReference type="FunFam" id="3.30.230.10:FF:000012">
    <property type="entry name" value="DNA topoisomerase 4 subunit B"/>
    <property type="match status" value="1"/>
</dbReference>
<dbReference type="FunFam" id="3.40.50.670:FF:000003">
    <property type="entry name" value="DNA topoisomerase 4 subunit B"/>
    <property type="match status" value="1"/>
</dbReference>
<dbReference type="Gene3D" id="3.30.230.10">
    <property type="match status" value="1"/>
</dbReference>
<dbReference type="Gene3D" id="3.40.50.670">
    <property type="match status" value="1"/>
</dbReference>
<dbReference type="Gene3D" id="3.30.565.10">
    <property type="entry name" value="Histidine kinase-like ATPase, C-terminal domain"/>
    <property type="match status" value="1"/>
</dbReference>
<dbReference type="HAMAP" id="MF_00938">
    <property type="entry name" value="ParE_type1"/>
    <property type="match status" value="1"/>
</dbReference>
<dbReference type="InterPro" id="IPR002288">
    <property type="entry name" value="DNA_gyrase_B_C"/>
</dbReference>
<dbReference type="InterPro" id="IPR036890">
    <property type="entry name" value="HATPase_C_sf"/>
</dbReference>
<dbReference type="InterPro" id="IPR020568">
    <property type="entry name" value="Ribosomal_Su5_D2-typ_SF"/>
</dbReference>
<dbReference type="InterPro" id="IPR014721">
    <property type="entry name" value="Ribsml_uS5_D2-typ_fold_subgr"/>
</dbReference>
<dbReference type="InterPro" id="IPR001241">
    <property type="entry name" value="Topo_IIA"/>
</dbReference>
<dbReference type="InterPro" id="IPR013760">
    <property type="entry name" value="Topo_IIA-like_dom_sf"/>
</dbReference>
<dbReference type="InterPro" id="IPR013759">
    <property type="entry name" value="Topo_IIA_B_C"/>
</dbReference>
<dbReference type="InterPro" id="IPR013506">
    <property type="entry name" value="Topo_IIA_bsu_dom2"/>
</dbReference>
<dbReference type="InterPro" id="IPR018522">
    <property type="entry name" value="TopoIIA_CS"/>
</dbReference>
<dbReference type="InterPro" id="IPR005737">
    <property type="entry name" value="TopoIV_B_Gneg"/>
</dbReference>
<dbReference type="InterPro" id="IPR006171">
    <property type="entry name" value="TOPRIM_dom"/>
</dbReference>
<dbReference type="NCBIfam" id="TIGR01055">
    <property type="entry name" value="parE_Gneg"/>
    <property type="match status" value="1"/>
</dbReference>
<dbReference type="PANTHER" id="PTHR45866">
    <property type="entry name" value="DNA GYRASE/TOPOISOMERASE SUBUNIT B"/>
    <property type="match status" value="1"/>
</dbReference>
<dbReference type="PANTHER" id="PTHR45866:SF4">
    <property type="entry name" value="DNA TOPOISOMERASE 4 SUBUNIT B"/>
    <property type="match status" value="1"/>
</dbReference>
<dbReference type="Pfam" id="PF00204">
    <property type="entry name" value="DNA_gyraseB"/>
    <property type="match status" value="1"/>
</dbReference>
<dbReference type="Pfam" id="PF00986">
    <property type="entry name" value="DNA_gyraseB_C"/>
    <property type="match status" value="1"/>
</dbReference>
<dbReference type="Pfam" id="PF02518">
    <property type="entry name" value="HATPase_c"/>
    <property type="match status" value="1"/>
</dbReference>
<dbReference type="Pfam" id="PF01751">
    <property type="entry name" value="Toprim"/>
    <property type="match status" value="1"/>
</dbReference>
<dbReference type="PRINTS" id="PR01098">
    <property type="entry name" value="TOPISMRASE4B"/>
</dbReference>
<dbReference type="PRINTS" id="PR00418">
    <property type="entry name" value="TPI2FAMILY"/>
</dbReference>
<dbReference type="SMART" id="SM00387">
    <property type="entry name" value="HATPase_c"/>
    <property type="match status" value="1"/>
</dbReference>
<dbReference type="SMART" id="SM00433">
    <property type="entry name" value="TOP2c"/>
    <property type="match status" value="1"/>
</dbReference>
<dbReference type="SUPFAM" id="SSF55874">
    <property type="entry name" value="ATPase domain of HSP90 chaperone/DNA topoisomerase II/histidine kinase"/>
    <property type="match status" value="1"/>
</dbReference>
<dbReference type="SUPFAM" id="SSF54211">
    <property type="entry name" value="Ribosomal protein S5 domain 2-like"/>
    <property type="match status" value="1"/>
</dbReference>
<dbReference type="SUPFAM" id="SSF56719">
    <property type="entry name" value="Type II DNA topoisomerase"/>
    <property type="match status" value="1"/>
</dbReference>
<dbReference type="PROSITE" id="PS00177">
    <property type="entry name" value="TOPOISOMERASE_II"/>
    <property type="match status" value="1"/>
</dbReference>
<dbReference type="PROSITE" id="PS50880">
    <property type="entry name" value="TOPRIM"/>
    <property type="match status" value="1"/>
</dbReference>
<gene>
    <name evidence="1" type="primary">parE</name>
    <name type="ordered locus">HI_1528</name>
</gene>
<evidence type="ECO:0000255" key="1">
    <source>
        <dbReference type="HAMAP-Rule" id="MF_00938"/>
    </source>
</evidence>
<feature type="chain" id="PRO_0000145430" description="DNA topoisomerase 4 subunit B">
    <location>
        <begin position="1"/>
        <end position="632"/>
    </location>
</feature>
<feature type="domain" description="Toprim" evidence="1">
    <location>
        <begin position="412"/>
        <end position="525"/>
    </location>
</feature>
<feature type="binding site" evidence="1">
    <location>
        <position position="5"/>
    </location>
    <ligand>
        <name>ATP</name>
        <dbReference type="ChEBI" id="CHEBI:30616"/>
    </ligand>
</feature>
<feature type="binding site" evidence="1">
    <location>
        <position position="42"/>
    </location>
    <ligand>
        <name>ATP</name>
        <dbReference type="ChEBI" id="CHEBI:30616"/>
    </ligand>
</feature>
<feature type="binding site" evidence="1">
    <location>
        <position position="69"/>
    </location>
    <ligand>
        <name>ATP</name>
        <dbReference type="ChEBI" id="CHEBI:30616"/>
    </ligand>
</feature>
<feature type="binding site" evidence="1">
    <location>
        <begin position="110"/>
        <end position="116"/>
    </location>
    <ligand>
        <name>ATP</name>
        <dbReference type="ChEBI" id="CHEBI:30616"/>
    </ligand>
</feature>
<feature type="binding site" evidence="1">
    <location>
        <position position="334"/>
    </location>
    <ligand>
        <name>ATP</name>
        <dbReference type="ChEBI" id="CHEBI:30616"/>
    </ligand>
</feature>
<feature type="binding site" evidence="1">
    <location>
        <position position="418"/>
    </location>
    <ligand>
        <name>Mg(2+)</name>
        <dbReference type="ChEBI" id="CHEBI:18420"/>
        <label>1</label>
        <note>catalytic</note>
    </ligand>
</feature>
<feature type="binding site" evidence="1">
    <location>
        <position position="490"/>
    </location>
    <ligand>
        <name>Mg(2+)</name>
        <dbReference type="ChEBI" id="CHEBI:18420"/>
        <label>1</label>
        <note>catalytic</note>
    </ligand>
</feature>
<feature type="binding site" evidence="1">
    <location>
        <position position="490"/>
    </location>
    <ligand>
        <name>Mg(2+)</name>
        <dbReference type="ChEBI" id="CHEBI:18420"/>
        <label>2</label>
    </ligand>
</feature>
<feature type="binding site" evidence="1">
    <location>
        <position position="492"/>
    </location>
    <ligand>
        <name>Mg(2+)</name>
        <dbReference type="ChEBI" id="CHEBI:18420"/>
        <label>2</label>
    </ligand>
</feature>
<feature type="site" description="Interaction with DNA" evidence="1">
    <location>
        <position position="443"/>
    </location>
</feature>
<feature type="site" description="Interaction with DNA" evidence="1">
    <location>
        <position position="446"/>
    </location>
</feature>
<feature type="site" description="Interaction with DNA" evidence="1">
    <location>
        <position position="497"/>
    </location>
</feature>
<feature type="site" description="Interaction with DNA" evidence="1">
    <location>
        <position position="617"/>
    </location>
</feature>
<organism>
    <name type="scientific">Haemophilus influenzae (strain ATCC 51907 / DSM 11121 / KW20 / Rd)</name>
    <dbReference type="NCBI Taxonomy" id="71421"/>
    <lineage>
        <taxon>Bacteria</taxon>
        <taxon>Pseudomonadati</taxon>
        <taxon>Pseudomonadota</taxon>
        <taxon>Gammaproteobacteria</taxon>
        <taxon>Pasteurellales</taxon>
        <taxon>Pasteurellaceae</taxon>
        <taxon>Haemophilus</taxon>
    </lineage>
</organism>
<comment type="function">
    <text evidence="1">Topoisomerase IV is essential for chromosome segregation. It relaxes supercoiled DNA. Performs the decatenation events required during the replication of a circular DNA molecule.</text>
</comment>
<comment type="catalytic activity">
    <reaction evidence="1">
        <text>ATP-dependent breakage, passage and rejoining of double-stranded DNA.</text>
        <dbReference type="EC" id="5.6.2.2"/>
    </reaction>
</comment>
<comment type="cofactor">
    <cofactor evidence="1">
        <name>Mg(2+)</name>
        <dbReference type="ChEBI" id="CHEBI:18420"/>
    </cofactor>
    <cofactor evidence="1">
        <name>Mn(2+)</name>
        <dbReference type="ChEBI" id="CHEBI:29035"/>
    </cofactor>
    <cofactor evidence="1">
        <name>Ca(2+)</name>
        <dbReference type="ChEBI" id="CHEBI:29108"/>
    </cofactor>
    <text evidence="1">Binds two Mg(2+) per subunit. The magnesium ions form salt bridges with both the protein and the DNA. Can also accept other divalent metal cations, such as Mn(2+) or Ca(2+).</text>
</comment>
<comment type="subunit">
    <text evidence="1">Heterotetramer composed of ParC and ParE.</text>
</comment>
<comment type="similarity">
    <text evidence="1">Belongs to the type II topoisomerase family. ParE type 1 subfamily.</text>
</comment>